<organism>
    <name type="scientific">Escherichia coli (strain UTI89 / UPEC)</name>
    <dbReference type="NCBI Taxonomy" id="364106"/>
    <lineage>
        <taxon>Bacteria</taxon>
        <taxon>Pseudomonadati</taxon>
        <taxon>Pseudomonadota</taxon>
        <taxon>Gammaproteobacteria</taxon>
        <taxon>Enterobacterales</taxon>
        <taxon>Enterobacteriaceae</taxon>
        <taxon>Escherichia</taxon>
    </lineage>
</organism>
<sequence>MTVQDYLLKFRKISSLESLEKLYDHLNYTLTDDQELINMYRAADHRRAELVSGGRLFDLGQVPKSVWHYVQ</sequence>
<keyword id="KW-0238">DNA-binding</keyword>
<keyword id="KW-0804">Transcription</keyword>
<keyword id="KW-0805">Transcription regulation</keyword>
<name>CNU_ECOUT</name>
<proteinExistence type="inferred from homology"/>
<comment type="function">
    <text evidence="2">Modifies the set of genes regulated by H-NS; Hha and cnu (YdgT) increase the number of genes bound by H-NS/StpA and may also modulate the oligomerization of the H-NS/StpA-complex on DNA. The complex formed with H-NS binds to the specific 26-bp cnb site in the origin of replication oriC.</text>
</comment>
<comment type="subunit">
    <text evidence="2">Forms complexes with both H-NS and StpA.</text>
</comment>
<comment type="similarity">
    <text evidence="3">Belongs to the Hha/YmoA/Cnu family.</text>
</comment>
<gene>
    <name type="primary">cnu</name>
    <name type="synonym">ydgT</name>
    <name type="ordered locus">UTI89_C1815</name>
</gene>
<feature type="chain" id="PRO_0000305049" description="OriC-binding nucleoid-associated protein">
    <location>
        <begin position="1"/>
        <end position="71"/>
    </location>
</feature>
<feature type="site" description="Interacts with H-NS" evidence="1">
    <location>
        <position position="44"/>
    </location>
</feature>
<reference key="1">
    <citation type="journal article" date="2006" name="Proc. Natl. Acad. Sci. U.S.A.">
        <title>Identification of genes subject to positive selection in uropathogenic strains of Escherichia coli: a comparative genomics approach.</title>
        <authorList>
            <person name="Chen S.L."/>
            <person name="Hung C.-S."/>
            <person name="Xu J."/>
            <person name="Reigstad C.S."/>
            <person name="Magrini V."/>
            <person name="Sabo A."/>
            <person name="Blasiar D."/>
            <person name="Bieri T."/>
            <person name="Meyer R.R."/>
            <person name="Ozersky P."/>
            <person name="Armstrong J.R."/>
            <person name="Fulton R.S."/>
            <person name="Latreille J.P."/>
            <person name="Spieth J."/>
            <person name="Hooton T.M."/>
            <person name="Mardis E.R."/>
            <person name="Hultgren S.J."/>
            <person name="Gordon J.I."/>
        </authorList>
    </citation>
    <scope>NUCLEOTIDE SEQUENCE [LARGE SCALE GENOMIC DNA]</scope>
    <source>
        <strain>UTI89 / UPEC</strain>
    </source>
</reference>
<dbReference type="EMBL" id="CP000243">
    <property type="protein sequence ID" value="ABE07293.1"/>
    <property type="molecule type" value="Genomic_DNA"/>
</dbReference>
<dbReference type="RefSeq" id="WP_000217950.1">
    <property type="nucleotide sequence ID" value="NZ_CP064825.1"/>
</dbReference>
<dbReference type="SMR" id="Q1RBH1"/>
<dbReference type="GeneID" id="93775777"/>
<dbReference type="KEGG" id="eci:UTI89_C1815"/>
<dbReference type="HOGENOM" id="CLU_190629_0_0_6"/>
<dbReference type="Proteomes" id="UP000001952">
    <property type="component" value="Chromosome"/>
</dbReference>
<dbReference type="GO" id="GO:0003677">
    <property type="term" value="F:DNA binding"/>
    <property type="evidence" value="ECO:0007669"/>
    <property type="project" value="UniProtKB-KW"/>
</dbReference>
<dbReference type="FunFam" id="1.20.1280.40:FF:000002">
    <property type="entry name" value="OriC-binding nucleoid-associated protein"/>
    <property type="match status" value="1"/>
</dbReference>
<dbReference type="Gene3D" id="1.20.1280.40">
    <property type="entry name" value="HHA"/>
    <property type="match status" value="1"/>
</dbReference>
<dbReference type="InterPro" id="IPR007985">
    <property type="entry name" value="Hemolysn_expr_modulating_HHA"/>
</dbReference>
<dbReference type="InterPro" id="IPR036666">
    <property type="entry name" value="HHA_sf"/>
</dbReference>
<dbReference type="NCBIfam" id="NF007703">
    <property type="entry name" value="PRK10391.1"/>
    <property type="match status" value="1"/>
</dbReference>
<dbReference type="Pfam" id="PF05321">
    <property type="entry name" value="HHA"/>
    <property type="match status" value="1"/>
</dbReference>
<dbReference type="SUPFAM" id="SSF68989">
    <property type="entry name" value="Hemolysin expression modulating protein HHA"/>
    <property type="match status" value="1"/>
</dbReference>
<accession>Q1RBH1</accession>
<evidence type="ECO:0000250" key="1"/>
<evidence type="ECO:0000250" key="2">
    <source>
        <dbReference type="UniProtKB" id="P64467"/>
    </source>
</evidence>
<evidence type="ECO:0000305" key="3"/>
<protein>
    <recommendedName>
        <fullName>OriC-binding nucleoid-associated protein</fullName>
    </recommendedName>
    <alternativeName>
        <fullName>H-NS/StpA-binding protein 2</fullName>
    </alternativeName>
    <alternativeName>
        <fullName>Transcription modulator YdgT</fullName>
    </alternativeName>
</protein>